<comment type="function">
    <text evidence="1">O-methyltransferase that catalyzes the 2 O-methylation steps in the ubiquinone biosynthetic pathway.</text>
</comment>
<comment type="catalytic activity">
    <reaction evidence="1">
        <text>a 3-demethylubiquinol + S-adenosyl-L-methionine = a ubiquinol + S-adenosyl-L-homocysteine + H(+)</text>
        <dbReference type="Rhea" id="RHEA:44380"/>
        <dbReference type="Rhea" id="RHEA-COMP:9566"/>
        <dbReference type="Rhea" id="RHEA-COMP:10914"/>
        <dbReference type="ChEBI" id="CHEBI:15378"/>
        <dbReference type="ChEBI" id="CHEBI:17976"/>
        <dbReference type="ChEBI" id="CHEBI:57856"/>
        <dbReference type="ChEBI" id="CHEBI:59789"/>
        <dbReference type="ChEBI" id="CHEBI:84422"/>
        <dbReference type="EC" id="2.1.1.64"/>
    </reaction>
</comment>
<comment type="catalytic activity">
    <reaction evidence="1">
        <text>a 3-(all-trans-polyprenyl)benzene-1,2-diol + S-adenosyl-L-methionine = a 2-methoxy-6-(all-trans-polyprenyl)phenol + S-adenosyl-L-homocysteine + H(+)</text>
        <dbReference type="Rhea" id="RHEA:31411"/>
        <dbReference type="Rhea" id="RHEA-COMP:9550"/>
        <dbReference type="Rhea" id="RHEA-COMP:9551"/>
        <dbReference type="ChEBI" id="CHEBI:15378"/>
        <dbReference type="ChEBI" id="CHEBI:57856"/>
        <dbReference type="ChEBI" id="CHEBI:59789"/>
        <dbReference type="ChEBI" id="CHEBI:62729"/>
        <dbReference type="ChEBI" id="CHEBI:62731"/>
        <dbReference type="EC" id="2.1.1.222"/>
    </reaction>
</comment>
<comment type="pathway">
    <text evidence="1">Cofactor biosynthesis; ubiquinone biosynthesis.</text>
</comment>
<comment type="similarity">
    <text evidence="1">Belongs to the methyltransferase superfamily. UbiG/COQ3 family.</text>
</comment>
<evidence type="ECO:0000255" key="1">
    <source>
        <dbReference type="HAMAP-Rule" id="MF_00472"/>
    </source>
</evidence>
<feature type="chain" id="PRO_1000199687" description="Ubiquinone biosynthesis O-methyltransferase">
    <location>
        <begin position="1"/>
        <end position="242"/>
    </location>
</feature>
<feature type="binding site" evidence="1">
    <location>
        <position position="44"/>
    </location>
    <ligand>
        <name>S-adenosyl-L-methionine</name>
        <dbReference type="ChEBI" id="CHEBI:59789"/>
    </ligand>
</feature>
<feature type="binding site" evidence="1">
    <location>
        <position position="64"/>
    </location>
    <ligand>
        <name>S-adenosyl-L-methionine</name>
        <dbReference type="ChEBI" id="CHEBI:59789"/>
    </ligand>
</feature>
<feature type="binding site" evidence="1">
    <location>
        <position position="85"/>
    </location>
    <ligand>
        <name>S-adenosyl-L-methionine</name>
        <dbReference type="ChEBI" id="CHEBI:59789"/>
    </ligand>
</feature>
<feature type="binding site" evidence="1">
    <location>
        <position position="129"/>
    </location>
    <ligand>
        <name>S-adenosyl-L-methionine</name>
        <dbReference type="ChEBI" id="CHEBI:59789"/>
    </ligand>
</feature>
<protein>
    <recommendedName>
        <fullName evidence="1">Ubiquinone biosynthesis O-methyltransferase</fullName>
    </recommendedName>
    <alternativeName>
        <fullName evidence="1">2-polyprenyl-6-hydroxyphenol methylase</fullName>
        <ecNumber evidence="1">2.1.1.222</ecNumber>
    </alternativeName>
    <alternativeName>
        <fullName evidence="1">3-demethylubiquinone 3-O-methyltransferase</fullName>
        <ecNumber evidence="1">2.1.1.64</ecNumber>
    </alternativeName>
</protein>
<dbReference type="EC" id="2.1.1.222" evidence="1"/>
<dbReference type="EC" id="2.1.1.64" evidence="1"/>
<dbReference type="EMBL" id="CP000964">
    <property type="protein sequence ID" value="ACI06549.1"/>
    <property type="molecule type" value="Genomic_DNA"/>
</dbReference>
<dbReference type="SMR" id="B5XNZ3"/>
<dbReference type="KEGG" id="kpe:KPK_1510"/>
<dbReference type="HOGENOM" id="CLU_042432_5_0_6"/>
<dbReference type="UniPathway" id="UPA00232"/>
<dbReference type="Proteomes" id="UP000001734">
    <property type="component" value="Chromosome"/>
</dbReference>
<dbReference type="GO" id="GO:0102208">
    <property type="term" value="F:2-polyprenyl-6-hydroxyphenol methylase activity"/>
    <property type="evidence" value="ECO:0007669"/>
    <property type="project" value="UniProtKB-EC"/>
</dbReference>
<dbReference type="GO" id="GO:0061542">
    <property type="term" value="F:3-demethylubiquinol 3-O-methyltransferase activity"/>
    <property type="evidence" value="ECO:0007669"/>
    <property type="project" value="UniProtKB-UniRule"/>
</dbReference>
<dbReference type="GO" id="GO:0010420">
    <property type="term" value="F:polyprenyldihydroxybenzoate methyltransferase activity"/>
    <property type="evidence" value="ECO:0007669"/>
    <property type="project" value="InterPro"/>
</dbReference>
<dbReference type="GO" id="GO:0032259">
    <property type="term" value="P:methylation"/>
    <property type="evidence" value="ECO:0007669"/>
    <property type="project" value="UniProtKB-KW"/>
</dbReference>
<dbReference type="CDD" id="cd02440">
    <property type="entry name" value="AdoMet_MTases"/>
    <property type="match status" value="1"/>
</dbReference>
<dbReference type="FunFam" id="3.40.50.150:FF:000028">
    <property type="entry name" value="Ubiquinone biosynthesis O-methyltransferase"/>
    <property type="match status" value="1"/>
</dbReference>
<dbReference type="Gene3D" id="3.40.50.150">
    <property type="entry name" value="Vaccinia Virus protein VP39"/>
    <property type="match status" value="1"/>
</dbReference>
<dbReference type="HAMAP" id="MF_00472">
    <property type="entry name" value="UbiG"/>
    <property type="match status" value="1"/>
</dbReference>
<dbReference type="InterPro" id="IPR029063">
    <property type="entry name" value="SAM-dependent_MTases_sf"/>
</dbReference>
<dbReference type="InterPro" id="IPR010233">
    <property type="entry name" value="UbiG_MeTrfase"/>
</dbReference>
<dbReference type="NCBIfam" id="TIGR01983">
    <property type="entry name" value="UbiG"/>
    <property type="match status" value="1"/>
</dbReference>
<dbReference type="PANTHER" id="PTHR43464">
    <property type="entry name" value="METHYLTRANSFERASE"/>
    <property type="match status" value="1"/>
</dbReference>
<dbReference type="PANTHER" id="PTHR43464:SF19">
    <property type="entry name" value="UBIQUINONE BIOSYNTHESIS O-METHYLTRANSFERASE, MITOCHONDRIAL"/>
    <property type="match status" value="1"/>
</dbReference>
<dbReference type="Pfam" id="PF13489">
    <property type="entry name" value="Methyltransf_23"/>
    <property type="match status" value="1"/>
</dbReference>
<dbReference type="SUPFAM" id="SSF53335">
    <property type="entry name" value="S-adenosyl-L-methionine-dependent methyltransferases"/>
    <property type="match status" value="1"/>
</dbReference>
<proteinExistence type="inferred from homology"/>
<organism>
    <name type="scientific">Klebsiella pneumoniae (strain 342)</name>
    <dbReference type="NCBI Taxonomy" id="507522"/>
    <lineage>
        <taxon>Bacteria</taxon>
        <taxon>Pseudomonadati</taxon>
        <taxon>Pseudomonadota</taxon>
        <taxon>Gammaproteobacteria</taxon>
        <taxon>Enterobacterales</taxon>
        <taxon>Enterobacteriaceae</taxon>
        <taxon>Klebsiella/Raoultella group</taxon>
        <taxon>Klebsiella</taxon>
        <taxon>Klebsiella pneumoniae complex</taxon>
    </lineage>
</organism>
<sequence>MNAEKTSVAPNVDHAEIAKFEAVASRWWDLEGEFKPLHRINPLRLGYIAERSGGLFGKKVLDVGCGGGILAESMAREGATVTGLDMGAEPLQVAKLHALESGIQVDYVQETVEEHAAKHPQQYDVVTCMEMLEHVPDPQSVVHACARLVKPGGQVFFSTINRNGKAWLMAVVGAEYVMKMVPKGTHDVKKFIKPAELLSWVDQTTLKEQHIIGLHYNPLTNTFKLAPGVDVNYMLHTTAKQD</sequence>
<keyword id="KW-0489">Methyltransferase</keyword>
<keyword id="KW-0949">S-adenosyl-L-methionine</keyword>
<keyword id="KW-0808">Transferase</keyword>
<keyword id="KW-0831">Ubiquinone biosynthesis</keyword>
<gene>
    <name evidence="1" type="primary">ubiG</name>
    <name type="ordered locus">KPK_1510</name>
</gene>
<reference key="1">
    <citation type="journal article" date="2008" name="PLoS Genet.">
        <title>Complete genome sequence of the N2-fixing broad host range endophyte Klebsiella pneumoniae 342 and virulence predictions verified in mice.</title>
        <authorList>
            <person name="Fouts D.E."/>
            <person name="Tyler H.L."/>
            <person name="DeBoy R.T."/>
            <person name="Daugherty S."/>
            <person name="Ren Q."/>
            <person name="Badger J.H."/>
            <person name="Durkin A.S."/>
            <person name="Huot H."/>
            <person name="Shrivastava S."/>
            <person name="Kothari S."/>
            <person name="Dodson R.J."/>
            <person name="Mohamoud Y."/>
            <person name="Khouri H."/>
            <person name="Roesch L.F.W."/>
            <person name="Krogfelt K.A."/>
            <person name="Struve C."/>
            <person name="Triplett E.W."/>
            <person name="Methe B.A."/>
        </authorList>
    </citation>
    <scope>NUCLEOTIDE SEQUENCE [LARGE SCALE GENOMIC DNA]</scope>
    <source>
        <strain>342</strain>
    </source>
</reference>
<name>UBIG_KLEP3</name>
<accession>B5XNZ3</accession>